<comment type="function">
    <text evidence="1">Component of the ASTRA complex involved in chromatin remodeling.</text>
</comment>
<comment type="subunit">
    <text evidence="1">Component of the ASTRA chromatin remodeling machinery complex.</text>
</comment>
<comment type="subcellular location">
    <subcellularLocation>
        <location evidence="1">Nucleus</location>
    </subcellularLocation>
</comment>
<comment type="similarity">
    <text evidence="2">Belongs to the WD repeat ASA1 family.</text>
</comment>
<feature type="chain" id="PRO_0000402217" description="ASTRA-associated protein 1">
    <location>
        <begin position="1"/>
        <end position="449"/>
    </location>
</feature>
<feature type="repeat" description="WD 1">
    <location>
        <begin position="11"/>
        <end position="54"/>
    </location>
</feature>
<feature type="repeat" description="WD 2">
    <location>
        <begin position="57"/>
        <end position="95"/>
    </location>
</feature>
<feature type="repeat" description="WD 3">
    <location>
        <begin position="113"/>
        <end position="157"/>
    </location>
</feature>
<feature type="repeat" description="WD 4">
    <location>
        <begin position="224"/>
        <end position="263"/>
    </location>
</feature>
<feature type="repeat" description="WD 5">
    <location>
        <begin position="273"/>
        <end position="309"/>
    </location>
</feature>
<feature type="repeat" description="WD 6">
    <location>
        <begin position="313"/>
        <end position="350"/>
    </location>
</feature>
<feature type="repeat" description="WD 7">
    <location>
        <begin position="420"/>
        <end position="449"/>
    </location>
</feature>
<gene>
    <name type="primary">ASA1</name>
    <name type="ORF">PGUG_05705</name>
</gene>
<keyword id="KW-0156">Chromatin regulator</keyword>
<keyword id="KW-0539">Nucleus</keyword>
<keyword id="KW-1185">Reference proteome</keyword>
<keyword id="KW-0677">Repeat</keyword>
<keyword id="KW-0853">WD repeat</keyword>
<sequence>MEPRQKGALRGHKNPITCTIVFKDHKRNCNTLVTSDNEGWVAWWDISTKRPLGVWRAHSNSILSVVQIDHNLLLTHGKDSCVRIWAITQYEGFSKTFPAENHTESGSHRWPEYVEIPVNTLNFCNVCYLNGKLITPATQDSNNFDIYSIFPASAAHFPDIESRLSLRRIVANADPLALHKKAKSKENLTMGIDFEISDENSKRDGFGIMMKVVFVSPTLFYIGYESGHIIGFSLTEYKPNVNVKSKEGTTKAFDASFINKEPTLEIIYISAFHCPHPITALFFHDKLYAGSAGKTLSIHTKQSSIAEEPEIESYNLKIAGVQDIAVLPELAIVAFWNGVVKGYEKQSTEAESDQRELTTDFSTEPNTISQFKPAWKMSRDVPRIGTLESNNGQKEAQELPSKVKANTLCILKSSAITHSSYRDLVRARQVSPRLLTVGYADGVTIMYEI</sequence>
<accession>A5DR04</accession>
<reference key="1">
    <citation type="journal article" date="2009" name="Nature">
        <title>Evolution of pathogenicity and sexual reproduction in eight Candida genomes.</title>
        <authorList>
            <person name="Butler G."/>
            <person name="Rasmussen M.D."/>
            <person name="Lin M.F."/>
            <person name="Santos M.A.S."/>
            <person name="Sakthikumar S."/>
            <person name="Munro C.A."/>
            <person name="Rheinbay E."/>
            <person name="Grabherr M."/>
            <person name="Forche A."/>
            <person name="Reedy J.L."/>
            <person name="Agrafioti I."/>
            <person name="Arnaud M.B."/>
            <person name="Bates S."/>
            <person name="Brown A.J.P."/>
            <person name="Brunke S."/>
            <person name="Costanzo M.C."/>
            <person name="Fitzpatrick D.A."/>
            <person name="de Groot P.W.J."/>
            <person name="Harris D."/>
            <person name="Hoyer L.L."/>
            <person name="Hube B."/>
            <person name="Klis F.M."/>
            <person name="Kodira C."/>
            <person name="Lennard N."/>
            <person name="Logue M.E."/>
            <person name="Martin R."/>
            <person name="Neiman A.M."/>
            <person name="Nikolaou E."/>
            <person name="Quail M.A."/>
            <person name="Quinn J."/>
            <person name="Santos M.C."/>
            <person name="Schmitzberger F.F."/>
            <person name="Sherlock G."/>
            <person name="Shah P."/>
            <person name="Silverstein K.A.T."/>
            <person name="Skrzypek M.S."/>
            <person name="Soll D."/>
            <person name="Staggs R."/>
            <person name="Stansfield I."/>
            <person name="Stumpf M.P.H."/>
            <person name="Sudbery P.E."/>
            <person name="Srikantha T."/>
            <person name="Zeng Q."/>
            <person name="Berman J."/>
            <person name="Berriman M."/>
            <person name="Heitman J."/>
            <person name="Gow N.A.R."/>
            <person name="Lorenz M.C."/>
            <person name="Birren B.W."/>
            <person name="Kellis M."/>
            <person name="Cuomo C.A."/>
        </authorList>
    </citation>
    <scope>NUCLEOTIDE SEQUENCE [LARGE SCALE GENOMIC DNA]</scope>
    <source>
        <strain>ATCC 6260 / CBS 566 / DSM 6381 / JCM 1539 / NBRC 10279 / NRRL Y-324</strain>
    </source>
</reference>
<evidence type="ECO:0000250" key="1"/>
<evidence type="ECO:0000305" key="2"/>
<dbReference type="EMBL" id="CH408162">
    <property type="protein sequence ID" value="EDK41607.2"/>
    <property type="molecule type" value="Genomic_DNA"/>
</dbReference>
<dbReference type="RefSeq" id="XP_001481942.1">
    <property type="nucleotide sequence ID" value="XM_001481892.1"/>
</dbReference>
<dbReference type="FunCoup" id="A5DR04">
    <property type="interactions" value="52"/>
</dbReference>
<dbReference type="STRING" id="294746.A5DR04"/>
<dbReference type="GeneID" id="5123791"/>
<dbReference type="KEGG" id="pgu:PGUG_05705"/>
<dbReference type="VEuPathDB" id="FungiDB:PGUG_05705"/>
<dbReference type="eggNOG" id="KOG0322">
    <property type="taxonomic scope" value="Eukaryota"/>
</dbReference>
<dbReference type="HOGENOM" id="CLU_045414_0_0_1"/>
<dbReference type="InParanoid" id="A5DR04"/>
<dbReference type="OMA" id="LVCCNTQ"/>
<dbReference type="OrthoDB" id="7668193at2759"/>
<dbReference type="Proteomes" id="UP000001997">
    <property type="component" value="Unassembled WGS sequence"/>
</dbReference>
<dbReference type="GO" id="GO:0005634">
    <property type="term" value="C:nucleus"/>
    <property type="evidence" value="ECO:0007669"/>
    <property type="project" value="UniProtKB-SubCell"/>
</dbReference>
<dbReference type="GO" id="GO:0006325">
    <property type="term" value="P:chromatin organization"/>
    <property type="evidence" value="ECO:0007669"/>
    <property type="project" value="UniProtKB-KW"/>
</dbReference>
<dbReference type="Gene3D" id="2.130.10.10">
    <property type="entry name" value="YVTN repeat-like/Quinoprotein amine dehydrogenase"/>
    <property type="match status" value="1"/>
</dbReference>
<dbReference type="InterPro" id="IPR015943">
    <property type="entry name" value="WD40/YVTN_repeat-like_dom_sf"/>
</dbReference>
<dbReference type="InterPro" id="IPR036322">
    <property type="entry name" value="WD40_repeat_dom_sf"/>
</dbReference>
<dbReference type="InterPro" id="IPR001680">
    <property type="entry name" value="WD40_rpt"/>
</dbReference>
<dbReference type="PANTHER" id="PTHR19854:SF1">
    <property type="entry name" value="GUANINE NUCLEOTIDE-BINDING PROTEIN SUBUNIT BETA-LIKE PROTEIN 1"/>
    <property type="match status" value="1"/>
</dbReference>
<dbReference type="PANTHER" id="PTHR19854">
    <property type="entry name" value="TRANSDUCIN BETA-LIKE 3"/>
    <property type="match status" value="1"/>
</dbReference>
<dbReference type="SMART" id="SM00320">
    <property type="entry name" value="WD40"/>
    <property type="match status" value="2"/>
</dbReference>
<dbReference type="SUPFAM" id="SSF50978">
    <property type="entry name" value="WD40 repeat-like"/>
    <property type="match status" value="1"/>
</dbReference>
<dbReference type="PROSITE" id="PS50294">
    <property type="entry name" value="WD_REPEATS_REGION"/>
    <property type="match status" value="1"/>
</dbReference>
<name>ASA1_PICGU</name>
<protein>
    <recommendedName>
        <fullName>ASTRA-associated protein 1</fullName>
    </recommendedName>
</protein>
<proteinExistence type="inferred from homology"/>
<organism>
    <name type="scientific">Meyerozyma guilliermondii (strain ATCC 6260 / CBS 566 / DSM 6381 / JCM 1539 / NBRC 10279 / NRRL Y-324)</name>
    <name type="common">Yeast</name>
    <name type="synonym">Candida guilliermondii</name>
    <dbReference type="NCBI Taxonomy" id="294746"/>
    <lineage>
        <taxon>Eukaryota</taxon>
        <taxon>Fungi</taxon>
        <taxon>Dikarya</taxon>
        <taxon>Ascomycota</taxon>
        <taxon>Saccharomycotina</taxon>
        <taxon>Pichiomycetes</taxon>
        <taxon>Debaryomycetaceae</taxon>
        <taxon>Meyerozyma</taxon>
    </lineage>
</organism>